<sequence>MSAHGTNEGALWGGRFESGPAAAMAALSKSTHFDWVLAPYDVRASQAHARVLHKAGLLGDEDLATMLDGLGRLAADVASGDFIPSESDEDVHGALERGLIDRVGPDVGGRLRAGRSRNDQVATLFRMWLRDAVRRVAEGVLDIVDALATQAAAHPSAVMPGKTHLQAAQPVLLAHHLLAHTHPLLRDVQRLRDFDVRAAVSPYGSGALAGSSLGLDPEAIAAELAFDSSAENSIDATSSRDFAAEAAFVLAMIGVDLSRMAEEVILWSTPEFGYITLADAWSTGSSIMPQKKNPDVSELTRGKSGRLIGNLTGLLATLKAQPLAYNRDLQEDKEPVFDSVAQLELLLPAITGLVATLEFHTDRMAELAPAGFTLATDIAEWLVRQGVPFRVAHEAAGACVRVAEARGAGLEDLTDEELAGVDPALTPDVREVLTVEGSIASRNARGGTAGIRVAEQLGGVRQLSESLREWCR</sequence>
<organism>
    <name type="scientific">Rhodococcus opacus (strain B4)</name>
    <dbReference type="NCBI Taxonomy" id="632772"/>
    <lineage>
        <taxon>Bacteria</taxon>
        <taxon>Bacillati</taxon>
        <taxon>Actinomycetota</taxon>
        <taxon>Actinomycetes</taxon>
        <taxon>Mycobacteriales</taxon>
        <taxon>Nocardiaceae</taxon>
        <taxon>Rhodococcus</taxon>
    </lineage>
</organism>
<protein>
    <recommendedName>
        <fullName evidence="1">Argininosuccinate lyase</fullName>
        <shortName evidence="1">ASAL</shortName>
        <ecNumber evidence="1">4.3.2.1</ecNumber>
    </recommendedName>
    <alternativeName>
        <fullName evidence="1">Arginosuccinase</fullName>
    </alternativeName>
</protein>
<reference key="1">
    <citation type="submission" date="2009-03" db="EMBL/GenBank/DDBJ databases">
        <title>Comparison of the complete genome sequences of Rhodococcus erythropolis PR4 and Rhodococcus opacus B4.</title>
        <authorList>
            <person name="Takarada H."/>
            <person name="Sekine M."/>
            <person name="Hosoyama A."/>
            <person name="Yamada R."/>
            <person name="Fujisawa T."/>
            <person name="Omata S."/>
            <person name="Shimizu A."/>
            <person name="Tsukatani N."/>
            <person name="Tanikawa S."/>
            <person name="Fujita N."/>
            <person name="Harayama S."/>
        </authorList>
    </citation>
    <scope>NUCLEOTIDE SEQUENCE [LARGE SCALE GENOMIC DNA]</scope>
    <source>
        <strain>B4</strain>
    </source>
</reference>
<gene>
    <name evidence="1" type="primary">argH</name>
    <name type="ordered locus">ROP_06800</name>
</gene>
<dbReference type="EC" id="4.3.2.1" evidence="1"/>
<dbReference type="EMBL" id="AP011115">
    <property type="protein sequence ID" value="BAH48927.1"/>
    <property type="molecule type" value="Genomic_DNA"/>
</dbReference>
<dbReference type="RefSeq" id="WP_012687930.1">
    <property type="nucleotide sequence ID" value="NC_012522.1"/>
</dbReference>
<dbReference type="SMR" id="C1ASZ5"/>
<dbReference type="STRING" id="632772.ROP_06800"/>
<dbReference type="KEGG" id="rop:ROP_06800"/>
<dbReference type="PATRIC" id="fig|632772.20.peg.741"/>
<dbReference type="HOGENOM" id="CLU_027272_2_2_11"/>
<dbReference type="OrthoDB" id="9769623at2"/>
<dbReference type="UniPathway" id="UPA00068">
    <property type="reaction ID" value="UER00114"/>
</dbReference>
<dbReference type="Proteomes" id="UP000002212">
    <property type="component" value="Chromosome"/>
</dbReference>
<dbReference type="GO" id="GO:0005829">
    <property type="term" value="C:cytosol"/>
    <property type="evidence" value="ECO:0007669"/>
    <property type="project" value="TreeGrafter"/>
</dbReference>
<dbReference type="GO" id="GO:0004056">
    <property type="term" value="F:argininosuccinate lyase activity"/>
    <property type="evidence" value="ECO:0007669"/>
    <property type="project" value="UniProtKB-UniRule"/>
</dbReference>
<dbReference type="GO" id="GO:0042450">
    <property type="term" value="P:arginine biosynthetic process via ornithine"/>
    <property type="evidence" value="ECO:0007669"/>
    <property type="project" value="InterPro"/>
</dbReference>
<dbReference type="GO" id="GO:0006526">
    <property type="term" value="P:L-arginine biosynthetic process"/>
    <property type="evidence" value="ECO:0007669"/>
    <property type="project" value="UniProtKB-UniRule"/>
</dbReference>
<dbReference type="CDD" id="cd01359">
    <property type="entry name" value="Argininosuccinate_lyase"/>
    <property type="match status" value="1"/>
</dbReference>
<dbReference type="FunFam" id="1.10.40.30:FF:000001">
    <property type="entry name" value="Argininosuccinate lyase"/>
    <property type="match status" value="1"/>
</dbReference>
<dbReference type="FunFam" id="1.20.200.10:FF:000015">
    <property type="entry name" value="argininosuccinate lyase isoform X2"/>
    <property type="match status" value="1"/>
</dbReference>
<dbReference type="Gene3D" id="1.10.40.30">
    <property type="entry name" value="Fumarase/aspartase (C-terminal domain)"/>
    <property type="match status" value="1"/>
</dbReference>
<dbReference type="Gene3D" id="1.20.200.10">
    <property type="entry name" value="Fumarase/aspartase (Central domain)"/>
    <property type="match status" value="1"/>
</dbReference>
<dbReference type="Gene3D" id="1.10.275.10">
    <property type="entry name" value="Fumarase/aspartase (N-terminal domain)"/>
    <property type="match status" value="1"/>
</dbReference>
<dbReference type="HAMAP" id="MF_00006">
    <property type="entry name" value="Arg_succ_lyase"/>
    <property type="match status" value="1"/>
</dbReference>
<dbReference type="InterPro" id="IPR029419">
    <property type="entry name" value="Arg_succ_lyase_C"/>
</dbReference>
<dbReference type="InterPro" id="IPR009049">
    <property type="entry name" value="Argininosuccinate_lyase"/>
</dbReference>
<dbReference type="InterPro" id="IPR024083">
    <property type="entry name" value="Fumarase/histidase_N"/>
</dbReference>
<dbReference type="InterPro" id="IPR020557">
    <property type="entry name" value="Fumarate_lyase_CS"/>
</dbReference>
<dbReference type="InterPro" id="IPR000362">
    <property type="entry name" value="Fumarate_lyase_fam"/>
</dbReference>
<dbReference type="InterPro" id="IPR022761">
    <property type="entry name" value="Fumarate_lyase_N"/>
</dbReference>
<dbReference type="InterPro" id="IPR008948">
    <property type="entry name" value="L-Aspartase-like"/>
</dbReference>
<dbReference type="NCBIfam" id="TIGR00838">
    <property type="entry name" value="argH"/>
    <property type="match status" value="1"/>
</dbReference>
<dbReference type="PANTHER" id="PTHR43814">
    <property type="entry name" value="ARGININOSUCCINATE LYASE"/>
    <property type="match status" value="1"/>
</dbReference>
<dbReference type="PANTHER" id="PTHR43814:SF1">
    <property type="entry name" value="ARGININOSUCCINATE LYASE"/>
    <property type="match status" value="1"/>
</dbReference>
<dbReference type="Pfam" id="PF14698">
    <property type="entry name" value="ASL_C2"/>
    <property type="match status" value="1"/>
</dbReference>
<dbReference type="Pfam" id="PF00206">
    <property type="entry name" value="Lyase_1"/>
    <property type="match status" value="1"/>
</dbReference>
<dbReference type="PRINTS" id="PR00145">
    <property type="entry name" value="ARGSUCLYASE"/>
</dbReference>
<dbReference type="PRINTS" id="PR00149">
    <property type="entry name" value="FUMRATELYASE"/>
</dbReference>
<dbReference type="SUPFAM" id="SSF48557">
    <property type="entry name" value="L-aspartase-like"/>
    <property type="match status" value="1"/>
</dbReference>
<dbReference type="PROSITE" id="PS00163">
    <property type="entry name" value="FUMARATE_LYASES"/>
    <property type="match status" value="1"/>
</dbReference>
<proteinExistence type="inferred from homology"/>
<keyword id="KW-0028">Amino-acid biosynthesis</keyword>
<keyword id="KW-0055">Arginine biosynthesis</keyword>
<keyword id="KW-0963">Cytoplasm</keyword>
<keyword id="KW-0456">Lyase</keyword>
<evidence type="ECO:0000255" key="1">
    <source>
        <dbReference type="HAMAP-Rule" id="MF_00006"/>
    </source>
</evidence>
<accession>C1ASZ5</accession>
<name>ARLY_RHOOB</name>
<feature type="chain" id="PRO_1000116341" description="Argininosuccinate lyase">
    <location>
        <begin position="1"/>
        <end position="472"/>
    </location>
</feature>
<comment type="catalytic activity">
    <reaction evidence="1">
        <text>2-(N(omega)-L-arginino)succinate = fumarate + L-arginine</text>
        <dbReference type="Rhea" id="RHEA:24020"/>
        <dbReference type="ChEBI" id="CHEBI:29806"/>
        <dbReference type="ChEBI" id="CHEBI:32682"/>
        <dbReference type="ChEBI" id="CHEBI:57472"/>
        <dbReference type="EC" id="4.3.2.1"/>
    </reaction>
</comment>
<comment type="pathway">
    <text evidence="1">Amino-acid biosynthesis; L-arginine biosynthesis; L-arginine from L-ornithine and carbamoyl phosphate: step 3/3.</text>
</comment>
<comment type="subcellular location">
    <subcellularLocation>
        <location evidence="1">Cytoplasm</location>
    </subcellularLocation>
</comment>
<comment type="similarity">
    <text evidence="1">Belongs to the lyase 1 family. Argininosuccinate lyase subfamily.</text>
</comment>